<name>RDRP_I51A0</name>
<gene>
    <name evidence="2" type="primary">PB1</name>
</gene>
<organism>
    <name type="scientific">Influenza A virus (strain A/USA:Albany/12/1951 H1N1)</name>
    <dbReference type="NCBI Taxonomy" id="425580"/>
    <lineage>
        <taxon>Viruses</taxon>
        <taxon>Riboviria</taxon>
        <taxon>Orthornavirae</taxon>
        <taxon>Negarnaviricota</taxon>
        <taxon>Polyploviricotina</taxon>
        <taxon>Insthoviricetes</taxon>
        <taxon>Articulavirales</taxon>
        <taxon>Orthomyxoviridae</taxon>
        <taxon>Alphainfluenzavirus</taxon>
        <taxon>Alphainfluenzavirus influenzae</taxon>
        <taxon>Influenza A virus</taxon>
    </lineage>
</organism>
<keyword id="KW-1262">Eukaryotic host gene expression shutoff by virus</keyword>
<keyword id="KW-1191">Eukaryotic host transcription shutoff by virus</keyword>
<keyword id="KW-1035">Host cytoplasm</keyword>
<keyword id="KW-1190">Host gene expression shutoff by virus</keyword>
<keyword id="KW-1048">Host nucleus</keyword>
<keyword id="KW-0945">Host-virus interaction</keyword>
<keyword id="KW-1104">Inhibition of host RNA polymerase II by virus</keyword>
<keyword id="KW-0547">Nucleotide-binding</keyword>
<keyword id="KW-0548">Nucleotidyltransferase</keyword>
<keyword id="KW-0597">Phosphoprotein</keyword>
<keyword id="KW-0696">RNA-directed RNA polymerase</keyword>
<keyword id="KW-0808">Transferase</keyword>
<keyword id="KW-0693">Viral RNA replication</keyword>
<keyword id="KW-1195">Viral transcription</keyword>
<accession>A4U7B4</accession>
<feature type="chain" id="PRO_0000373051" description="RNA-directed RNA polymerase catalytic subunit">
    <location>
        <begin position="1"/>
        <end position="757"/>
    </location>
</feature>
<feature type="domain" description="RdRp catalytic" evidence="2">
    <location>
        <begin position="286"/>
        <end position="483"/>
    </location>
</feature>
<feature type="region of interest" description="Disordered" evidence="3">
    <location>
        <begin position="50"/>
        <end position="82"/>
    </location>
</feature>
<feature type="region of interest" description="Promoter-binding site" evidence="2">
    <location>
        <begin position="249"/>
        <end position="256"/>
    </location>
</feature>
<feature type="short sequence motif" description="Nuclear localization signal" evidence="2">
    <location>
        <begin position="187"/>
        <end position="195"/>
    </location>
</feature>
<feature type="short sequence motif" description="Nuclear localization signal" evidence="2">
    <location>
        <begin position="203"/>
        <end position="216"/>
    </location>
</feature>
<reference key="1">
    <citation type="submission" date="2007-04" db="EMBL/GenBank/DDBJ databases">
        <title>The NIAID influenza genome sequencing project.</title>
        <authorList>
            <person name="Spiro D."/>
            <person name="Sengamalay N."/>
            <person name="Boyne A."/>
            <person name="Bera J."/>
            <person name="Ghedin E."/>
            <person name="Zaborsky J."/>
            <person name="Subbu V."/>
            <person name="Sparenborg J."/>
            <person name="Gallagher T."/>
            <person name="Overton L."/>
            <person name="Althoff R."/>
            <person name="Liu X."/>
            <person name="Sitz J."/>
            <person name="Katzel D."/>
            <person name="Neupane R."/>
            <person name="Shumway M."/>
            <person name="Koo H."/>
            <person name="Griesemer S."/>
            <person name="StGeorge K."/>
            <person name="Bennett R."/>
            <person name="Taylor J."/>
            <person name="Bao Y."/>
            <person name="Bolotov P."/>
            <person name="Dernovoy D."/>
            <person name="Kiryutin B."/>
            <person name="Lipman D.J."/>
            <person name="Tatusova T."/>
        </authorList>
    </citation>
    <scope>NUCLEOTIDE SEQUENCE [GENOMIC RNA]</scope>
</reference>
<reference key="2">
    <citation type="submission" date="2007-04" db="EMBL/GenBank/DDBJ databases">
        <authorList>
            <consortium name="The NIAID Influenza Genome Sequencing Consortium"/>
        </authorList>
    </citation>
    <scope>NUCLEOTIDE SEQUENCE [GENOMIC RNA]</scope>
</reference>
<evidence type="ECO:0000250" key="1">
    <source>
        <dbReference type="UniProtKB" id="P03431"/>
    </source>
</evidence>
<evidence type="ECO:0000255" key="2">
    <source>
        <dbReference type="HAMAP-Rule" id="MF_04065"/>
    </source>
</evidence>
<evidence type="ECO:0000256" key="3">
    <source>
        <dbReference type="SAM" id="MobiDB-lite"/>
    </source>
</evidence>
<comment type="function">
    <text evidence="2">RNA-dependent RNA polymerase which is responsible for replication and transcription of virus RNA segments. The transcription of viral mRNAs occurs by a unique mechanism called cap-snatching. 5' methylated caps of cellular mRNAs are cleaved after 10-13 nucleotides by PA. In turn, these short capped RNAs are used as primers by PB1 for transcription of viral mRNAs. During virus replication, PB1 initiates RNA synthesis and copy vRNA into complementary RNA (cRNA) which in turn serves as a template for the production of more vRNAs.</text>
</comment>
<comment type="catalytic activity">
    <reaction evidence="2">
        <text>RNA(n) + a ribonucleoside 5'-triphosphate = RNA(n+1) + diphosphate</text>
        <dbReference type="Rhea" id="RHEA:21248"/>
        <dbReference type="Rhea" id="RHEA-COMP:14527"/>
        <dbReference type="Rhea" id="RHEA-COMP:17342"/>
        <dbReference type="ChEBI" id="CHEBI:33019"/>
        <dbReference type="ChEBI" id="CHEBI:61557"/>
        <dbReference type="ChEBI" id="CHEBI:140395"/>
        <dbReference type="EC" id="2.7.7.48"/>
    </reaction>
</comment>
<comment type="subunit">
    <text evidence="1 2">Influenza RNA polymerase is composed of three subunits: PB1, PB2 and PA. Interacts (via N-terminus) with PA (via C-terminus). Interacts (via C-terminus) with PB2 (via N-terminus); this interaction is essential for transcription initiation. Interacts (via C-terminus) with human PKP2 (via N-terminus); the interaction competitively inhibits the interaction between the RNA polymerase subunits PB1 and PB2 (By similarity).</text>
</comment>
<comment type="subcellular location">
    <subcellularLocation>
        <location evidence="2">Host nucleus</location>
    </subcellularLocation>
    <subcellularLocation>
        <location evidence="2">Host cytoplasm</location>
    </subcellularLocation>
</comment>
<comment type="PTM">
    <text evidence="2">Phosphorylated by host PRKCA.</text>
</comment>
<comment type="similarity">
    <text evidence="2">Belongs to the influenza viruses polymerase PB1 family.</text>
</comment>
<dbReference type="EC" id="2.7.7.48" evidence="2"/>
<dbReference type="EMBL" id="CY021827">
    <property type="protein sequence ID" value="ABP49489.1"/>
    <property type="molecule type" value="Viral_cRNA"/>
</dbReference>
<dbReference type="SMR" id="A4U7B4"/>
<dbReference type="Proteomes" id="UP000007556">
    <property type="component" value="Genome"/>
</dbReference>
<dbReference type="GO" id="GO:0030430">
    <property type="term" value="C:host cell cytoplasm"/>
    <property type="evidence" value="ECO:0007669"/>
    <property type="project" value="UniProtKB-SubCell"/>
</dbReference>
<dbReference type="GO" id="GO:0042025">
    <property type="term" value="C:host cell nucleus"/>
    <property type="evidence" value="ECO:0007669"/>
    <property type="project" value="UniProtKB-SubCell"/>
</dbReference>
<dbReference type="GO" id="GO:0000166">
    <property type="term" value="F:nucleotide binding"/>
    <property type="evidence" value="ECO:0007669"/>
    <property type="project" value="UniProtKB-UniRule"/>
</dbReference>
<dbReference type="GO" id="GO:0003723">
    <property type="term" value="F:RNA binding"/>
    <property type="evidence" value="ECO:0007669"/>
    <property type="project" value="InterPro"/>
</dbReference>
<dbReference type="GO" id="GO:0003968">
    <property type="term" value="F:RNA-directed RNA polymerase activity"/>
    <property type="evidence" value="ECO:0007669"/>
    <property type="project" value="UniProtKB-UniRule"/>
</dbReference>
<dbReference type="GO" id="GO:0006351">
    <property type="term" value="P:DNA-templated transcription"/>
    <property type="evidence" value="ECO:0007669"/>
    <property type="project" value="UniProtKB-UniRule"/>
</dbReference>
<dbReference type="GO" id="GO:0039657">
    <property type="term" value="P:symbiont-mediated suppression of host gene expression"/>
    <property type="evidence" value="ECO:0007669"/>
    <property type="project" value="UniProtKB-KW"/>
</dbReference>
<dbReference type="GO" id="GO:0039523">
    <property type="term" value="P:symbiont-mediated suppression of host mRNA transcription via inhibition of RNA polymerase II activity"/>
    <property type="evidence" value="ECO:0007669"/>
    <property type="project" value="UniProtKB-UniRule"/>
</dbReference>
<dbReference type="GO" id="GO:0039694">
    <property type="term" value="P:viral RNA genome replication"/>
    <property type="evidence" value="ECO:0007669"/>
    <property type="project" value="UniProtKB-UniRule"/>
</dbReference>
<dbReference type="GO" id="GO:0019083">
    <property type="term" value="P:viral transcription"/>
    <property type="evidence" value="ECO:0007669"/>
    <property type="project" value="UniProtKB-KW"/>
</dbReference>
<dbReference type="Gene3D" id="6.10.140.720">
    <property type="match status" value="1"/>
</dbReference>
<dbReference type="HAMAP" id="MF_04065">
    <property type="entry name" value="INFV_RDRP"/>
    <property type="match status" value="1"/>
</dbReference>
<dbReference type="InterPro" id="IPR007099">
    <property type="entry name" value="RNA-dir_pol_NSvirus"/>
</dbReference>
<dbReference type="InterPro" id="IPR001407">
    <property type="entry name" value="RNA_pol_PB1_influenza"/>
</dbReference>
<dbReference type="Pfam" id="PF00602">
    <property type="entry name" value="Flu_PB1"/>
    <property type="match status" value="1"/>
</dbReference>
<dbReference type="PIRSF" id="PIRSF000827">
    <property type="entry name" value="RdRPol_OMV"/>
    <property type="match status" value="1"/>
</dbReference>
<dbReference type="PROSITE" id="PS50525">
    <property type="entry name" value="RDRP_SSRNA_NEG_SEG"/>
    <property type="match status" value="1"/>
</dbReference>
<proteinExistence type="inferred from homology"/>
<organismHost>
    <name type="scientific">Aves</name>
    <dbReference type="NCBI Taxonomy" id="8782"/>
</organismHost>
<organismHost>
    <name type="scientific">Homo sapiens</name>
    <name type="common">Human</name>
    <dbReference type="NCBI Taxonomy" id="9606"/>
</organismHost>
<organismHost>
    <name type="scientific">Sus scrofa</name>
    <name type="common">Pig</name>
    <dbReference type="NCBI Taxonomy" id="9823"/>
</organismHost>
<sequence length="757" mass="86565">MDVNPTLLFLKVPAQNAISTTFPYTGDPPYSHGTGTGYTMDTVNRTHQYSERGRWTKNTETGAPQLNPIDGPLPEDNEPSGYAQTDCVLEAMAFLEESHPGIFENSCIETMEVVQQTRVDKLTQGRQTYDWTLNRNQPAATALANTIEVFRSNGLMANESGRLIDFLKDVMESMDKEEMEVTTHFQRKRRVRDNVTKKMVTQRTIGKKKQRLNKRSYLIRALTLNTMTKDAERGKLKRRAIATPGMQIRGFVYFVETLARSICEKLEQSGLPVGGNEKKAKLANVVRKMMTNSQDTEISFTITGDNTKWNENQNPRMFLAMITYITRNQPEWFRNILSIAPIMFSNKMARLGKGYMFESKSMKLRTQIPAEMIANIDLKYFNDSTRKKIEKIRPLLIDGTASLSPGMMMGMFNMLSTVLGVSILNLGQKRYTKTTYWWDGLQSSDDFALIVNAPNHAGIQAGVDRFYRTCKLLGINMSKKKSYINRTGTFEFTSFFYRYGFVANFSMELPSFGVSGINESADMSIGVTVIKNNMINNDLGPATAQMALQLFIKDYRYTYRCHRGDTQIQTRRSFEIKKLWEQTRSKAGLLVSDGGPNLYNIRNLHIPEVCLKWELMDEDYQGRLCNPLNPFVSHKEIESVNNAVMMPAHGPAKNMEYDAVATTHSWVPKRNRSILNTSQRGILEDEQMYQRCCNLFEKFFPSSSYRRPVGISSMVEAMVSRARIDARIDFESGRIKKEDFTEIMKICSTIEELRRQK</sequence>
<protein>
    <recommendedName>
        <fullName evidence="2">RNA-directed RNA polymerase catalytic subunit</fullName>
        <ecNumber evidence="2">2.7.7.48</ecNumber>
    </recommendedName>
    <alternativeName>
        <fullName evidence="2">Polymerase basic protein 1</fullName>
        <shortName evidence="2">PB1</shortName>
    </alternativeName>
    <alternativeName>
        <fullName evidence="2">RNA-directed RNA polymerase subunit P1</fullName>
    </alternativeName>
</protein>